<evidence type="ECO:0000250" key="1">
    <source>
        <dbReference type="UniProtKB" id="O75608"/>
    </source>
</evidence>
<evidence type="ECO:0000250" key="2">
    <source>
        <dbReference type="UniProtKB" id="Q84WK4"/>
    </source>
</evidence>
<evidence type="ECO:0000305" key="3"/>
<evidence type="ECO:0000312" key="4">
    <source>
        <dbReference type="EMBL" id="BAF16118.1"/>
    </source>
</evidence>
<evidence type="ECO:0000312" key="5">
    <source>
        <dbReference type="EMBL" id="CAE02816.1"/>
    </source>
</evidence>
<evidence type="ECO:0000312" key="6">
    <source>
        <dbReference type="EMBL" id="EEE61875.1"/>
    </source>
</evidence>
<accession>Q0J969</accession>
<accession>A0A0P0WGD8</accession>
<accession>B9FD78</accession>
<accession>Q7XR64</accession>
<comment type="function">
    <text evidence="2">Possesses carboxylesterase activity in vitro.</text>
</comment>
<comment type="similarity">
    <text evidence="3">Belongs to the AB hydrolase superfamily. AB hydrolase 2 family.</text>
</comment>
<comment type="sequence caution" evidence="3">
    <conflict type="erroneous initiation">
        <sequence resource="EMBL-CDS" id="CAE02816"/>
    </conflict>
    <text>Truncated N-terminus.</text>
</comment>
<proteinExistence type="inferred from homology"/>
<protein>
    <recommendedName>
        <fullName evidence="3">Probable carboxylesterase Os04g0669500</fullName>
        <ecNumber evidence="3">3.1.1.-</ecNumber>
    </recommendedName>
</protein>
<sequence>MSSRLRFLFSLAAAIAAASLLAAALRRRAPPSGLAARLVPAPMAAAAARNRSFVLWLHGLGDSGPANEPIRNFFSAPEFRLTKWAFPSAPNSPVSCNHGAVMPSWFDIHELPMSSGSPQDDSGVLKAVENVHAMIDKEVADGIPPENIFVCGFSQGGALTLASVLLYPKTLGGGAVFSGWLPFGSSVTERISPEARKTPILWSHGIADNVVLFEAGQAGPPFLQNAGFSCEFKAYPGLGHSISKEELYSLESWIKNHLKASQEKEN</sequence>
<gene>
    <name evidence="4" type="ordered locus">Os04g0669500</name>
    <name evidence="3" type="ordered locus">LOC_Os04g57370</name>
    <name evidence="6" type="ORF">OsJ_16562</name>
    <name evidence="5" type="ORF">OSJNBa0043A12.21</name>
</gene>
<keyword id="KW-0276">Fatty acid metabolism</keyword>
<keyword id="KW-0378">Hydrolase</keyword>
<keyword id="KW-0443">Lipid metabolism</keyword>
<keyword id="KW-1185">Reference proteome</keyword>
<reference key="1">
    <citation type="journal article" date="2002" name="Nature">
        <title>Sequence and analysis of rice chromosome 4.</title>
        <authorList>
            <person name="Feng Q."/>
            <person name="Zhang Y."/>
            <person name="Hao P."/>
            <person name="Wang S."/>
            <person name="Fu G."/>
            <person name="Huang Y."/>
            <person name="Li Y."/>
            <person name="Zhu J."/>
            <person name="Liu Y."/>
            <person name="Hu X."/>
            <person name="Jia P."/>
            <person name="Zhang Y."/>
            <person name="Zhao Q."/>
            <person name="Ying K."/>
            <person name="Yu S."/>
            <person name="Tang Y."/>
            <person name="Weng Q."/>
            <person name="Zhang L."/>
            <person name="Lu Y."/>
            <person name="Mu J."/>
            <person name="Lu Y."/>
            <person name="Zhang L.S."/>
            <person name="Yu Z."/>
            <person name="Fan D."/>
            <person name="Liu X."/>
            <person name="Lu T."/>
            <person name="Li C."/>
            <person name="Wu Y."/>
            <person name="Sun T."/>
            <person name="Lei H."/>
            <person name="Li T."/>
            <person name="Hu H."/>
            <person name="Guan J."/>
            <person name="Wu M."/>
            <person name="Zhang R."/>
            <person name="Zhou B."/>
            <person name="Chen Z."/>
            <person name="Chen L."/>
            <person name="Jin Z."/>
            <person name="Wang R."/>
            <person name="Yin H."/>
            <person name="Cai Z."/>
            <person name="Ren S."/>
            <person name="Lv G."/>
            <person name="Gu W."/>
            <person name="Zhu G."/>
            <person name="Tu Y."/>
            <person name="Jia J."/>
            <person name="Zhang Y."/>
            <person name="Chen J."/>
            <person name="Kang H."/>
            <person name="Chen X."/>
            <person name="Shao C."/>
            <person name="Sun Y."/>
            <person name="Hu Q."/>
            <person name="Zhang X."/>
            <person name="Zhang W."/>
            <person name="Wang L."/>
            <person name="Ding C."/>
            <person name="Sheng H."/>
            <person name="Gu J."/>
            <person name="Chen S."/>
            <person name="Ni L."/>
            <person name="Zhu F."/>
            <person name="Chen W."/>
            <person name="Lan L."/>
            <person name="Lai Y."/>
            <person name="Cheng Z."/>
            <person name="Gu M."/>
            <person name="Jiang J."/>
            <person name="Li J."/>
            <person name="Hong G."/>
            <person name="Xue Y."/>
            <person name="Han B."/>
        </authorList>
    </citation>
    <scope>NUCLEOTIDE SEQUENCE [LARGE SCALE GENOMIC DNA]</scope>
    <source>
        <strain>cv. Nipponbare</strain>
    </source>
</reference>
<reference key="2">
    <citation type="journal article" date="2005" name="Nature">
        <title>The map-based sequence of the rice genome.</title>
        <authorList>
            <consortium name="International rice genome sequencing project (IRGSP)"/>
        </authorList>
    </citation>
    <scope>NUCLEOTIDE SEQUENCE [LARGE SCALE GENOMIC DNA]</scope>
    <source>
        <strain>cv. Nipponbare</strain>
    </source>
</reference>
<reference key="3">
    <citation type="journal article" date="2008" name="Nucleic Acids Res.">
        <title>The rice annotation project database (RAP-DB): 2008 update.</title>
        <authorList>
            <consortium name="The rice annotation project (RAP)"/>
        </authorList>
    </citation>
    <scope>GENOME REANNOTATION</scope>
    <source>
        <strain>cv. Nipponbare</strain>
    </source>
</reference>
<reference key="4">
    <citation type="journal article" date="2013" name="Rice">
        <title>Improvement of the Oryza sativa Nipponbare reference genome using next generation sequence and optical map data.</title>
        <authorList>
            <person name="Kawahara Y."/>
            <person name="de la Bastide M."/>
            <person name="Hamilton J.P."/>
            <person name="Kanamori H."/>
            <person name="McCombie W.R."/>
            <person name="Ouyang S."/>
            <person name="Schwartz D.C."/>
            <person name="Tanaka T."/>
            <person name="Wu J."/>
            <person name="Zhou S."/>
            <person name="Childs K.L."/>
            <person name="Davidson R.M."/>
            <person name="Lin H."/>
            <person name="Quesada-Ocampo L."/>
            <person name="Vaillancourt B."/>
            <person name="Sakai H."/>
            <person name="Lee S.S."/>
            <person name="Kim J."/>
            <person name="Numa H."/>
            <person name="Itoh T."/>
            <person name="Buell C.R."/>
            <person name="Matsumoto T."/>
        </authorList>
    </citation>
    <scope>GENOME REANNOTATION</scope>
    <source>
        <strain>cv. Nipponbare</strain>
    </source>
</reference>
<reference key="5">
    <citation type="journal article" date="2005" name="PLoS Biol.">
        <title>The genomes of Oryza sativa: a history of duplications.</title>
        <authorList>
            <person name="Yu J."/>
            <person name="Wang J."/>
            <person name="Lin W."/>
            <person name="Li S."/>
            <person name="Li H."/>
            <person name="Zhou J."/>
            <person name="Ni P."/>
            <person name="Dong W."/>
            <person name="Hu S."/>
            <person name="Zeng C."/>
            <person name="Zhang J."/>
            <person name="Zhang Y."/>
            <person name="Li R."/>
            <person name="Xu Z."/>
            <person name="Li S."/>
            <person name="Li X."/>
            <person name="Zheng H."/>
            <person name="Cong L."/>
            <person name="Lin L."/>
            <person name="Yin J."/>
            <person name="Geng J."/>
            <person name="Li G."/>
            <person name="Shi J."/>
            <person name="Liu J."/>
            <person name="Lv H."/>
            <person name="Li J."/>
            <person name="Wang J."/>
            <person name="Deng Y."/>
            <person name="Ran L."/>
            <person name="Shi X."/>
            <person name="Wang X."/>
            <person name="Wu Q."/>
            <person name="Li C."/>
            <person name="Ren X."/>
            <person name="Wang J."/>
            <person name="Wang X."/>
            <person name="Li D."/>
            <person name="Liu D."/>
            <person name="Zhang X."/>
            <person name="Ji Z."/>
            <person name="Zhao W."/>
            <person name="Sun Y."/>
            <person name="Zhang Z."/>
            <person name="Bao J."/>
            <person name="Han Y."/>
            <person name="Dong L."/>
            <person name="Ji J."/>
            <person name="Chen P."/>
            <person name="Wu S."/>
            <person name="Liu J."/>
            <person name="Xiao Y."/>
            <person name="Bu D."/>
            <person name="Tan J."/>
            <person name="Yang L."/>
            <person name="Ye C."/>
            <person name="Zhang J."/>
            <person name="Xu J."/>
            <person name="Zhou Y."/>
            <person name="Yu Y."/>
            <person name="Zhang B."/>
            <person name="Zhuang S."/>
            <person name="Wei H."/>
            <person name="Liu B."/>
            <person name="Lei M."/>
            <person name="Yu H."/>
            <person name="Li Y."/>
            <person name="Xu H."/>
            <person name="Wei S."/>
            <person name="He X."/>
            <person name="Fang L."/>
            <person name="Zhang Z."/>
            <person name="Zhang Y."/>
            <person name="Huang X."/>
            <person name="Su Z."/>
            <person name="Tong W."/>
            <person name="Li J."/>
            <person name="Tong Z."/>
            <person name="Li S."/>
            <person name="Ye J."/>
            <person name="Wang L."/>
            <person name="Fang L."/>
            <person name="Lei T."/>
            <person name="Chen C.-S."/>
            <person name="Chen H.-C."/>
            <person name="Xu Z."/>
            <person name="Li H."/>
            <person name="Huang H."/>
            <person name="Zhang F."/>
            <person name="Xu H."/>
            <person name="Li N."/>
            <person name="Zhao C."/>
            <person name="Li S."/>
            <person name="Dong L."/>
            <person name="Huang Y."/>
            <person name="Li L."/>
            <person name="Xi Y."/>
            <person name="Qi Q."/>
            <person name="Li W."/>
            <person name="Zhang B."/>
            <person name="Hu W."/>
            <person name="Zhang Y."/>
            <person name="Tian X."/>
            <person name="Jiao Y."/>
            <person name="Liang X."/>
            <person name="Jin J."/>
            <person name="Gao L."/>
            <person name="Zheng W."/>
            <person name="Hao B."/>
            <person name="Liu S.-M."/>
            <person name="Wang W."/>
            <person name="Yuan L."/>
            <person name="Cao M."/>
            <person name="McDermott J."/>
            <person name="Samudrala R."/>
            <person name="Wang J."/>
            <person name="Wong G.K.-S."/>
            <person name="Yang H."/>
        </authorList>
    </citation>
    <scope>NUCLEOTIDE SEQUENCE [LARGE SCALE GENOMIC DNA]</scope>
    <source>
        <strain>cv. Nipponbare</strain>
    </source>
</reference>
<name>CAEH1_ORYSJ</name>
<organism>
    <name type="scientific">Oryza sativa subsp. japonica</name>
    <name type="common">Rice</name>
    <dbReference type="NCBI Taxonomy" id="39947"/>
    <lineage>
        <taxon>Eukaryota</taxon>
        <taxon>Viridiplantae</taxon>
        <taxon>Streptophyta</taxon>
        <taxon>Embryophyta</taxon>
        <taxon>Tracheophyta</taxon>
        <taxon>Spermatophyta</taxon>
        <taxon>Magnoliopsida</taxon>
        <taxon>Liliopsida</taxon>
        <taxon>Poales</taxon>
        <taxon>Poaceae</taxon>
        <taxon>BOP clade</taxon>
        <taxon>Oryzoideae</taxon>
        <taxon>Oryzeae</taxon>
        <taxon>Oryzinae</taxon>
        <taxon>Oryza</taxon>
        <taxon>Oryza sativa</taxon>
    </lineage>
</organism>
<dbReference type="EC" id="3.1.1.-" evidence="3"/>
<dbReference type="EMBL" id="AL606619">
    <property type="protein sequence ID" value="CAE02816.1"/>
    <property type="status" value="ALT_INIT"/>
    <property type="molecule type" value="Genomic_DNA"/>
</dbReference>
<dbReference type="EMBL" id="AP008210">
    <property type="protein sequence ID" value="BAF16118.1"/>
    <property type="molecule type" value="Genomic_DNA"/>
</dbReference>
<dbReference type="EMBL" id="AP014960">
    <property type="protein sequence ID" value="BAS91544.1"/>
    <property type="molecule type" value="Genomic_DNA"/>
</dbReference>
<dbReference type="EMBL" id="CM000141">
    <property type="protein sequence ID" value="EEE61875.1"/>
    <property type="molecule type" value="Genomic_DNA"/>
</dbReference>
<dbReference type="RefSeq" id="XP_015635942.1">
    <property type="nucleotide sequence ID" value="XM_015780456.1"/>
</dbReference>
<dbReference type="SMR" id="Q0J969"/>
<dbReference type="FunCoup" id="Q0J969">
    <property type="interactions" value="1908"/>
</dbReference>
<dbReference type="STRING" id="39947.Q0J969"/>
<dbReference type="ESTHER" id="orysa-q7xr64">
    <property type="family name" value="LYsophospholipase_carboxylesterase"/>
</dbReference>
<dbReference type="PaxDb" id="39947-Q0J969"/>
<dbReference type="EnsemblPlants" id="Os04t0669500-01">
    <property type="protein sequence ID" value="Os04t0669500-01"/>
    <property type="gene ID" value="Os04g0669500"/>
</dbReference>
<dbReference type="Gramene" id="Os04t0669500-01">
    <property type="protein sequence ID" value="Os04t0669500-01"/>
    <property type="gene ID" value="Os04g0669500"/>
</dbReference>
<dbReference type="KEGG" id="dosa:Os04g0669500"/>
<dbReference type="eggNOG" id="KOG2112">
    <property type="taxonomic scope" value="Eukaryota"/>
</dbReference>
<dbReference type="HOGENOM" id="CLU_049413_1_0_1"/>
<dbReference type="InParanoid" id="Q0J969"/>
<dbReference type="OMA" id="WYDILAM"/>
<dbReference type="OrthoDB" id="2418081at2759"/>
<dbReference type="Proteomes" id="UP000000763">
    <property type="component" value="Chromosome 4"/>
</dbReference>
<dbReference type="Proteomes" id="UP000007752">
    <property type="component" value="Chromosome 4"/>
</dbReference>
<dbReference type="Proteomes" id="UP000059680">
    <property type="component" value="Chromosome 4"/>
</dbReference>
<dbReference type="GO" id="GO:0005737">
    <property type="term" value="C:cytoplasm"/>
    <property type="evidence" value="ECO:0000318"/>
    <property type="project" value="GO_Central"/>
</dbReference>
<dbReference type="GO" id="GO:0052689">
    <property type="term" value="F:carboxylic ester hydrolase activity"/>
    <property type="evidence" value="ECO:0000318"/>
    <property type="project" value="GO_Central"/>
</dbReference>
<dbReference type="GO" id="GO:0008474">
    <property type="term" value="F:palmitoyl-(protein) hydrolase activity"/>
    <property type="evidence" value="ECO:0000318"/>
    <property type="project" value="GO_Central"/>
</dbReference>
<dbReference type="GO" id="GO:0006631">
    <property type="term" value="P:fatty acid metabolic process"/>
    <property type="evidence" value="ECO:0007669"/>
    <property type="project" value="UniProtKB-KW"/>
</dbReference>
<dbReference type="GO" id="GO:0010363">
    <property type="term" value="P:regulation of plant-type hypersensitive response"/>
    <property type="evidence" value="ECO:0000318"/>
    <property type="project" value="GO_Central"/>
</dbReference>
<dbReference type="FunFam" id="3.40.50.1820:FF:000232">
    <property type="entry name" value="Probable carboxylesterase SOBER1-like"/>
    <property type="match status" value="1"/>
</dbReference>
<dbReference type="Gene3D" id="3.40.50.1820">
    <property type="entry name" value="alpha/beta hydrolase"/>
    <property type="match status" value="1"/>
</dbReference>
<dbReference type="InterPro" id="IPR029058">
    <property type="entry name" value="AB_hydrolase_fold"/>
</dbReference>
<dbReference type="InterPro" id="IPR050565">
    <property type="entry name" value="LYPA1-2/EST-like"/>
</dbReference>
<dbReference type="InterPro" id="IPR003140">
    <property type="entry name" value="PLipase/COase/thioEstase"/>
</dbReference>
<dbReference type="PANTHER" id="PTHR10655:SF17">
    <property type="entry name" value="LYSOPHOSPHOLIPASE-LIKE PROTEIN 1"/>
    <property type="match status" value="1"/>
</dbReference>
<dbReference type="PANTHER" id="PTHR10655">
    <property type="entry name" value="LYSOPHOSPHOLIPASE-RELATED"/>
    <property type="match status" value="1"/>
</dbReference>
<dbReference type="Pfam" id="PF02230">
    <property type="entry name" value="Abhydrolase_2"/>
    <property type="match status" value="1"/>
</dbReference>
<dbReference type="SUPFAM" id="SSF53474">
    <property type="entry name" value="alpha/beta-Hydrolases"/>
    <property type="match status" value="1"/>
</dbReference>
<feature type="chain" id="PRO_0000433448" description="Probable carboxylesterase Os04g0669500">
    <location>
        <begin position="1"/>
        <end position="266"/>
    </location>
</feature>
<feature type="active site" description="Charge relay system" evidence="1">
    <location>
        <position position="154"/>
    </location>
</feature>
<feature type="active site" description="Charge relay system" evidence="1">
    <location>
        <position position="208"/>
    </location>
</feature>
<feature type="active site" description="Charge relay system" evidence="1">
    <location>
        <position position="240"/>
    </location>
</feature>
<feature type="sequence conflict" description="In Ref. 5; EEE61875." evidence="3" ref="5">
    <original>AA</original>
    <variation>PP</variation>
    <location>
        <begin position="45"/>
        <end position="46"/>
    </location>
</feature>
<feature type="sequence conflict" description="In Ref. 5; EEE61875." evidence="3" ref="5">
    <original>SFVLW</original>
    <variation>NFVLC</variation>
    <location>
        <begin position="52"/>
        <end position="56"/>
    </location>
</feature>
<feature type="sequence conflict" description="In Ref. 5; EEE61875." evidence="3" ref="5">
    <original>E</original>
    <variation>D</variation>
    <location>
        <position position="78"/>
    </location>
</feature>